<reference key="1">
    <citation type="journal article" date="2005" name="Science">
        <title>Genome sequence of the PCE-dechlorinating bacterium Dehalococcoides ethenogenes.</title>
        <authorList>
            <person name="Seshadri R."/>
            <person name="Adrian L."/>
            <person name="Fouts D.E."/>
            <person name="Eisen J.A."/>
            <person name="Phillippy A.M."/>
            <person name="Methe B.A."/>
            <person name="Ward N.L."/>
            <person name="Nelson W.C."/>
            <person name="DeBoy R.T."/>
            <person name="Khouri H.M."/>
            <person name="Kolonay J.F."/>
            <person name="Dodson R.J."/>
            <person name="Daugherty S.C."/>
            <person name="Brinkac L.M."/>
            <person name="Sullivan S.A."/>
            <person name="Madupu R."/>
            <person name="Nelson K.E."/>
            <person name="Kang K.H."/>
            <person name="Impraim M."/>
            <person name="Tran K."/>
            <person name="Robinson J.M."/>
            <person name="Forberger H.A."/>
            <person name="Fraser C.M."/>
            <person name="Zinder S.H."/>
            <person name="Heidelberg J.F."/>
        </authorList>
    </citation>
    <scope>NUCLEOTIDE SEQUENCE [LARGE SCALE GENOMIC DNA]</scope>
    <source>
        <strain>ATCC BAA-2266 / KCTC 15142 / 195</strain>
    </source>
</reference>
<dbReference type="EMBL" id="CP000027">
    <property type="protein sequence ID" value="AAW40348.1"/>
    <property type="molecule type" value="Genomic_DNA"/>
</dbReference>
<dbReference type="RefSeq" id="WP_010936153.1">
    <property type="nucleotide sequence ID" value="NC_002936.3"/>
</dbReference>
<dbReference type="SMR" id="Q3Z9H9"/>
<dbReference type="FunCoup" id="Q3Z9H9">
    <property type="interactions" value="377"/>
</dbReference>
<dbReference type="STRING" id="243164.DET0374"/>
<dbReference type="GeneID" id="3230312"/>
<dbReference type="KEGG" id="det:DET0374"/>
<dbReference type="eggNOG" id="COG0233">
    <property type="taxonomic scope" value="Bacteria"/>
</dbReference>
<dbReference type="HOGENOM" id="CLU_073981_2_0_0"/>
<dbReference type="InParanoid" id="Q3Z9H9"/>
<dbReference type="Proteomes" id="UP000008289">
    <property type="component" value="Chromosome"/>
</dbReference>
<dbReference type="GO" id="GO:0005737">
    <property type="term" value="C:cytoplasm"/>
    <property type="evidence" value="ECO:0007669"/>
    <property type="project" value="UniProtKB-SubCell"/>
</dbReference>
<dbReference type="GO" id="GO:0043023">
    <property type="term" value="F:ribosomal large subunit binding"/>
    <property type="evidence" value="ECO:0007669"/>
    <property type="project" value="TreeGrafter"/>
</dbReference>
<dbReference type="GO" id="GO:0006415">
    <property type="term" value="P:translational termination"/>
    <property type="evidence" value="ECO:0007669"/>
    <property type="project" value="UniProtKB-UniRule"/>
</dbReference>
<dbReference type="CDD" id="cd00520">
    <property type="entry name" value="RRF"/>
    <property type="match status" value="1"/>
</dbReference>
<dbReference type="FunFam" id="1.10.132.20:FF:000001">
    <property type="entry name" value="Ribosome-recycling factor"/>
    <property type="match status" value="1"/>
</dbReference>
<dbReference type="FunFam" id="3.30.1360.40:FF:000001">
    <property type="entry name" value="Ribosome-recycling factor"/>
    <property type="match status" value="1"/>
</dbReference>
<dbReference type="Gene3D" id="3.30.1360.40">
    <property type="match status" value="1"/>
</dbReference>
<dbReference type="Gene3D" id="1.10.132.20">
    <property type="entry name" value="Ribosome-recycling factor"/>
    <property type="match status" value="1"/>
</dbReference>
<dbReference type="HAMAP" id="MF_00040">
    <property type="entry name" value="RRF"/>
    <property type="match status" value="1"/>
</dbReference>
<dbReference type="InterPro" id="IPR002661">
    <property type="entry name" value="Ribosome_recyc_fac"/>
</dbReference>
<dbReference type="InterPro" id="IPR023584">
    <property type="entry name" value="Ribosome_recyc_fac_dom"/>
</dbReference>
<dbReference type="InterPro" id="IPR036191">
    <property type="entry name" value="RRF_sf"/>
</dbReference>
<dbReference type="NCBIfam" id="TIGR00496">
    <property type="entry name" value="frr"/>
    <property type="match status" value="1"/>
</dbReference>
<dbReference type="PANTHER" id="PTHR20982:SF3">
    <property type="entry name" value="MITOCHONDRIAL RIBOSOME RECYCLING FACTOR PSEUDO 1"/>
    <property type="match status" value="1"/>
</dbReference>
<dbReference type="PANTHER" id="PTHR20982">
    <property type="entry name" value="RIBOSOME RECYCLING FACTOR"/>
    <property type="match status" value="1"/>
</dbReference>
<dbReference type="Pfam" id="PF01765">
    <property type="entry name" value="RRF"/>
    <property type="match status" value="1"/>
</dbReference>
<dbReference type="SUPFAM" id="SSF55194">
    <property type="entry name" value="Ribosome recycling factor, RRF"/>
    <property type="match status" value="1"/>
</dbReference>
<accession>Q3Z9H9</accession>
<comment type="function">
    <text evidence="1">Responsible for the release of ribosomes from messenger RNA at the termination of protein biosynthesis. May increase the efficiency of translation by recycling ribosomes from one round of translation to another.</text>
</comment>
<comment type="subcellular location">
    <subcellularLocation>
        <location evidence="1">Cytoplasm</location>
    </subcellularLocation>
</comment>
<comment type="similarity">
    <text evidence="1">Belongs to the RRF family.</text>
</comment>
<name>RRF_DEHM1</name>
<organism>
    <name type="scientific">Dehalococcoides mccartyi (strain ATCC BAA-2266 / KCTC 15142 / 195)</name>
    <name type="common">Dehalococcoides ethenogenes (strain 195)</name>
    <dbReference type="NCBI Taxonomy" id="243164"/>
    <lineage>
        <taxon>Bacteria</taxon>
        <taxon>Bacillati</taxon>
        <taxon>Chloroflexota</taxon>
        <taxon>Dehalococcoidia</taxon>
        <taxon>Dehalococcoidales</taxon>
        <taxon>Dehalococcoidaceae</taxon>
        <taxon>Dehalococcoides</taxon>
    </lineage>
</organism>
<evidence type="ECO:0000255" key="1">
    <source>
        <dbReference type="HAMAP-Rule" id="MF_00040"/>
    </source>
</evidence>
<protein>
    <recommendedName>
        <fullName evidence="1">Ribosome-recycling factor</fullName>
        <shortName evidence="1">RRF</shortName>
    </recommendedName>
    <alternativeName>
        <fullName evidence="1">Ribosome-releasing factor</fullName>
    </alternativeName>
</protein>
<keyword id="KW-0963">Cytoplasm</keyword>
<keyword id="KW-0648">Protein biosynthesis</keyword>
<feature type="chain" id="PRO_1000003151" description="Ribosome-recycling factor">
    <location>
        <begin position="1"/>
        <end position="185"/>
    </location>
</feature>
<gene>
    <name evidence="1" type="primary">frr</name>
    <name type="ordered locus">DET0374</name>
</gene>
<sequence>MINEILQKSEKKMAASLDVLSQELSGIRTGRSSPALVEHIKVEYAGVPTPINHLASIAAPDPRYITIQPWDRSCLSAIEKAIMKSDLGLMPNNDGNIIRLNIPPLSEERRQEMIKMVSKRLEEDKIAMRNVRRDAMDEMKKLEKSKEISQDDLKRGSDQLQKITDSFIAKADKLGADKETELKQV</sequence>
<proteinExistence type="inferred from homology"/>